<gene>
    <name evidence="1" type="primary">rpsC</name>
    <name type="ordered locus">lp_1040</name>
</gene>
<feature type="chain" id="PRO_0000130135" description="Small ribosomal subunit protein uS3">
    <location>
        <begin position="1"/>
        <end position="217"/>
    </location>
</feature>
<feature type="domain" description="KH type-2" evidence="1">
    <location>
        <begin position="38"/>
        <end position="106"/>
    </location>
</feature>
<sequence>MGQKVNPTGLRVGIIRDWEAKWYAEKDFAAYLNEDLRIRKYIEQRLADASVSTVEIERAANRVNISIHTAKPGMVIGKGGSEVEALRKELNNLTGKRVHINIIEIKKPDLDAKLVGESIARQLEGRVAFRRAMRGAMQRTMRSGAKGIKTQVAGRLNGADMSRVEAYSDGTVPLHTLRADIDYSWVEARTTYGKLGVKTWIYRGEILPEKKSAKGGN</sequence>
<proteinExistence type="inferred from homology"/>
<keyword id="KW-1185">Reference proteome</keyword>
<keyword id="KW-0687">Ribonucleoprotein</keyword>
<keyword id="KW-0689">Ribosomal protein</keyword>
<keyword id="KW-0694">RNA-binding</keyword>
<keyword id="KW-0699">rRNA-binding</keyword>
<organism>
    <name type="scientific">Lactiplantibacillus plantarum (strain ATCC BAA-793 / NCIMB 8826 / WCFS1)</name>
    <name type="common">Lactobacillus plantarum</name>
    <dbReference type="NCBI Taxonomy" id="220668"/>
    <lineage>
        <taxon>Bacteria</taxon>
        <taxon>Bacillati</taxon>
        <taxon>Bacillota</taxon>
        <taxon>Bacilli</taxon>
        <taxon>Lactobacillales</taxon>
        <taxon>Lactobacillaceae</taxon>
        <taxon>Lactiplantibacillus</taxon>
    </lineage>
</organism>
<protein>
    <recommendedName>
        <fullName evidence="1">Small ribosomal subunit protein uS3</fullName>
    </recommendedName>
    <alternativeName>
        <fullName evidence="2">30S ribosomal protein S3</fullName>
    </alternativeName>
</protein>
<dbReference type="EMBL" id="AL935263">
    <property type="protein sequence ID" value="CCC78450.1"/>
    <property type="molecule type" value="Genomic_DNA"/>
</dbReference>
<dbReference type="RefSeq" id="WP_003638066.1">
    <property type="nucleotide sequence ID" value="NC_004567.2"/>
</dbReference>
<dbReference type="RefSeq" id="YP_004888964.1">
    <property type="nucleotide sequence ID" value="NC_004567.2"/>
</dbReference>
<dbReference type="SMR" id="Q88XY0"/>
<dbReference type="STRING" id="220668.lp_1040"/>
<dbReference type="EnsemblBacteria" id="CCC78450">
    <property type="protein sequence ID" value="CCC78450"/>
    <property type="gene ID" value="lp_1040"/>
</dbReference>
<dbReference type="GeneID" id="89668553"/>
<dbReference type="KEGG" id="lpl:lp_1040"/>
<dbReference type="PATRIC" id="fig|220668.9.peg.877"/>
<dbReference type="eggNOG" id="COG0092">
    <property type="taxonomic scope" value="Bacteria"/>
</dbReference>
<dbReference type="HOGENOM" id="CLU_058591_0_2_9"/>
<dbReference type="OrthoDB" id="9806396at2"/>
<dbReference type="PhylomeDB" id="Q88XY0"/>
<dbReference type="Proteomes" id="UP000000432">
    <property type="component" value="Chromosome"/>
</dbReference>
<dbReference type="GO" id="GO:0022627">
    <property type="term" value="C:cytosolic small ribosomal subunit"/>
    <property type="evidence" value="ECO:0007669"/>
    <property type="project" value="TreeGrafter"/>
</dbReference>
<dbReference type="GO" id="GO:0003729">
    <property type="term" value="F:mRNA binding"/>
    <property type="evidence" value="ECO:0007669"/>
    <property type="project" value="UniProtKB-UniRule"/>
</dbReference>
<dbReference type="GO" id="GO:0019843">
    <property type="term" value="F:rRNA binding"/>
    <property type="evidence" value="ECO:0007669"/>
    <property type="project" value="UniProtKB-UniRule"/>
</dbReference>
<dbReference type="GO" id="GO:0003735">
    <property type="term" value="F:structural constituent of ribosome"/>
    <property type="evidence" value="ECO:0007669"/>
    <property type="project" value="InterPro"/>
</dbReference>
<dbReference type="GO" id="GO:0006412">
    <property type="term" value="P:translation"/>
    <property type="evidence" value="ECO:0007669"/>
    <property type="project" value="UniProtKB-UniRule"/>
</dbReference>
<dbReference type="CDD" id="cd02412">
    <property type="entry name" value="KH-II_30S_S3"/>
    <property type="match status" value="1"/>
</dbReference>
<dbReference type="FunFam" id="3.30.300.20:FF:000001">
    <property type="entry name" value="30S ribosomal protein S3"/>
    <property type="match status" value="1"/>
</dbReference>
<dbReference type="Gene3D" id="3.30.300.20">
    <property type="match status" value="1"/>
</dbReference>
<dbReference type="Gene3D" id="3.30.1140.32">
    <property type="entry name" value="Ribosomal protein S3, C-terminal domain"/>
    <property type="match status" value="1"/>
</dbReference>
<dbReference type="HAMAP" id="MF_01309_B">
    <property type="entry name" value="Ribosomal_uS3_B"/>
    <property type="match status" value="1"/>
</dbReference>
<dbReference type="InterPro" id="IPR004087">
    <property type="entry name" value="KH_dom"/>
</dbReference>
<dbReference type="InterPro" id="IPR015946">
    <property type="entry name" value="KH_dom-like_a/b"/>
</dbReference>
<dbReference type="InterPro" id="IPR004044">
    <property type="entry name" value="KH_dom_type_2"/>
</dbReference>
<dbReference type="InterPro" id="IPR009019">
    <property type="entry name" value="KH_sf_prok-type"/>
</dbReference>
<dbReference type="InterPro" id="IPR036419">
    <property type="entry name" value="Ribosomal_S3_C_sf"/>
</dbReference>
<dbReference type="InterPro" id="IPR005704">
    <property type="entry name" value="Ribosomal_uS3_bac-typ"/>
</dbReference>
<dbReference type="InterPro" id="IPR001351">
    <property type="entry name" value="Ribosomal_uS3_C"/>
</dbReference>
<dbReference type="InterPro" id="IPR018280">
    <property type="entry name" value="Ribosomal_uS3_CS"/>
</dbReference>
<dbReference type="NCBIfam" id="TIGR01009">
    <property type="entry name" value="rpsC_bact"/>
    <property type="match status" value="1"/>
</dbReference>
<dbReference type="PANTHER" id="PTHR11760">
    <property type="entry name" value="30S/40S RIBOSOMAL PROTEIN S3"/>
    <property type="match status" value="1"/>
</dbReference>
<dbReference type="PANTHER" id="PTHR11760:SF19">
    <property type="entry name" value="SMALL RIBOSOMAL SUBUNIT PROTEIN US3C"/>
    <property type="match status" value="1"/>
</dbReference>
<dbReference type="Pfam" id="PF07650">
    <property type="entry name" value="KH_2"/>
    <property type="match status" value="1"/>
</dbReference>
<dbReference type="Pfam" id="PF00189">
    <property type="entry name" value="Ribosomal_S3_C"/>
    <property type="match status" value="1"/>
</dbReference>
<dbReference type="SMART" id="SM00322">
    <property type="entry name" value="KH"/>
    <property type="match status" value="1"/>
</dbReference>
<dbReference type="SUPFAM" id="SSF54814">
    <property type="entry name" value="Prokaryotic type KH domain (KH-domain type II)"/>
    <property type="match status" value="1"/>
</dbReference>
<dbReference type="SUPFAM" id="SSF54821">
    <property type="entry name" value="Ribosomal protein S3 C-terminal domain"/>
    <property type="match status" value="1"/>
</dbReference>
<dbReference type="PROSITE" id="PS50823">
    <property type="entry name" value="KH_TYPE_2"/>
    <property type="match status" value="1"/>
</dbReference>
<dbReference type="PROSITE" id="PS00548">
    <property type="entry name" value="RIBOSOMAL_S3"/>
    <property type="match status" value="1"/>
</dbReference>
<comment type="function">
    <text evidence="1">Binds the lower part of the 30S subunit head. Binds mRNA in the 70S ribosome, positioning it for translation.</text>
</comment>
<comment type="subunit">
    <text evidence="1">Part of the 30S ribosomal subunit. Forms a tight complex with proteins S10 and S14.</text>
</comment>
<comment type="similarity">
    <text evidence="1">Belongs to the universal ribosomal protein uS3 family.</text>
</comment>
<reference key="1">
    <citation type="journal article" date="2003" name="Proc. Natl. Acad. Sci. U.S.A.">
        <title>Complete genome sequence of Lactobacillus plantarum WCFS1.</title>
        <authorList>
            <person name="Kleerebezem M."/>
            <person name="Boekhorst J."/>
            <person name="van Kranenburg R."/>
            <person name="Molenaar D."/>
            <person name="Kuipers O.P."/>
            <person name="Leer R."/>
            <person name="Tarchini R."/>
            <person name="Peters S.A."/>
            <person name="Sandbrink H.M."/>
            <person name="Fiers M.W.E.J."/>
            <person name="Stiekema W."/>
            <person name="Klein Lankhorst R.M."/>
            <person name="Bron P.A."/>
            <person name="Hoffer S.M."/>
            <person name="Nierop Groot M.N."/>
            <person name="Kerkhoven R."/>
            <person name="De Vries M."/>
            <person name="Ursing B."/>
            <person name="De Vos W.M."/>
            <person name="Siezen R.J."/>
        </authorList>
    </citation>
    <scope>NUCLEOTIDE SEQUENCE [LARGE SCALE GENOMIC DNA]</scope>
    <source>
        <strain>ATCC BAA-793 / NCIMB 8826 / WCFS1</strain>
    </source>
</reference>
<reference key="2">
    <citation type="journal article" date="2012" name="J. Bacteriol.">
        <title>Complete resequencing and reannotation of the Lactobacillus plantarum WCFS1 genome.</title>
        <authorList>
            <person name="Siezen R.J."/>
            <person name="Francke C."/>
            <person name="Renckens B."/>
            <person name="Boekhorst J."/>
            <person name="Wels M."/>
            <person name="Kleerebezem M."/>
            <person name="van Hijum S.A."/>
        </authorList>
    </citation>
    <scope>NUCLEOTIDE SEQUENCE [LARGE SCALE GENOMIC DNA]</scope>
    <scope>GENOME REANNOTATION</scope>
    <source>
        <strain>ATCC BAA-793 / NCIMB 8826 / WCFS1</strain>
    </source>
</reference>
<evidence type="ECO:0000255" key="1">
    <source>
        <dbReference type="HAMAP-Rule" id="MF_01309"/>
    </source>
</evidence>
<evidence type="ECO:0000305" key="2"/>
<accession>Q88XY0</accession>
<accession>F9UML1</accession>
<name>RS3_LACPL</name>